<organism>
    <name type="scientific">Pseudomonas aeruginosa (strain UCBPP-PA14)</name>
    <dbReference type="NCBI Taxonomy" id="208963"/>
    <lineage>
        <taxon>Bacteria</taxon>
        <taxon>Pseudomonadati</taxon>
        <taxon>Pseudomonadota</taxon>
        <taxon>Gammaproteobacteria</taxon>
        <taxon>Pseudomonadales</taxon>
        <taxon>Pseudomonadaceae</taxon>
        <taxon>Pseudomonas</taxon>
    </lineage>
</organism>
<protein>
    <recommendedName>
        <fullName evidence="1">Orotate phosphoribosyltransferase</fullName>
        <shortName evidence="1">OPRT</shortName>
        <shortName evidence="1">OPRTase</shortName>
        <ecNumber evidence="1">2.4.2.10</ecNumber>
    </recommendedName>
</protein>
<sequence>MQAYQRDFIRFAIERGVLRFGEFTLKSGRTSPYFFNAGLFDSGLALARLGRFYAEAVIDSGIDFDVLFGPAYKGIPLAATTAVALAEQHQRDLPWCFNRKEAKDHGEGGTLVGAPLSGRVLIIDDVITAGTAIREVMQIIDAQGARAAGVLIALNRQERGKGELSAIQEVERDFGMPVVSIVSLEQVLEYLAEDAELKKHLPAVEAYRAQYGI</sequence>
<gene>
    <name evidence="1" type="primary">pyrE</name>
    <name type="ordered locus">PA14_70370</name>
</gene>
<keyword id="KW-0328">Glycosyltransferase</keyword>
<keyword id="KW-0460">Magnesium</keyword>
<keyword id="KW-0665">Pyrimidine biosynthesis</keyword>
<keyword id="KW-0808">Transferase</keyword>
<dbReference type="EC" id="2.4.2.10" evidence="1"/>
<dbReference type="EMBL" id="CP000438">
    <property type="protein sequence ID" value="ABJ14714.1"/>
    <property type="molecule type" value="Genomic_DNA"/>
</dbReference>
<dbReference type="RefSeq" id="WP_003096586.1">
    <property type="nucleotide sequence ID" value="NZ_CP034244.1"/>
</dbReference>
<dbReference type="SMR" id="Q02E31"/>
<dbReference type="KEGG" id="pau:PA14_70370"/>
<dbReference type="PseudoCAP" id="PA14_70370"/>
<dbReference type="HOGENOM" id="CLU_074878_0_1_6"/>
<dbReference type="BioCyc" id="PAER208963:G1G74-5924-MONOMER"/>
<dbReference type="UniPathway" id="UPA00070">
    <property type="reaction ID" value="UER00119"/>
</dbReference>
<dbReference type="Proteomes" id="UP000000653">
    <property type="component" value="Chromosome"/>
</dbReference>
<dbReference type="GO" id="GO:0005737">
    <property type="term" value="C:cytoplasm"/>
    <property type="evidence" value="ECO:0007669"/>
    <property type="project" value="TreeGrafter"/>
</dbReference>
<dbReference type="GO" id="GO:0000287">
    <property type="term" value="F:magnesium ion binding"/>
    <property type="evidence" value="ECO:0007669"/>
    <property type="project" value="UniProtKB-UniRule"/>
</dbReference>
<dbReference type="GO" id="GO:0004588">
    <property type="term" value="F:orotate phosphoribosyltransferase activity"/>
    <property type="evidence" value="ECO:0007669"/>
    <property type="project" value="UniProtKB-UniRule"/>
</dbReference>
<dbReference type="GO" id="GO:0006207">
    <property type="term" value="P:'de novo' pyrimidine nucleobase biosynthetic process"/>
    <property type="evidence" value="ECO:0007669"/>
    <property type="project" value="TreeGrafter"/>
</dbReference>
<dbReference type="GO" id="GO:0044205">
    <property type="term" value="P:'de novo' UMP biosynthetic process"/>
    <property type="evidence" value="ECO:0007669"/>
    <property type="project" value="UniProtKB-UniRule"/>
</dbReference>
<dbReference type="GO" id="GO:0046132">
    <property type="term" value="P:pyrimidine ribonucleoside biosynthetic process"/>
    <property type="evidence" value="ECO:0007669"/>
    <property type="project" value="TreeGrafter"/>
</dbReference>
<dbReference type="CDD" id="cd06223">
    <property type="entry name" value="PRTases_typeI"/>
    <property type="match status" value="1"/>
</dbReference>
<dbReference type="FunFam" id="3.40.50.2020:FF:000008">
    <property type="entry name" value="Orotate phosphoribosyltransferase"/>
    <property type="match status" value="1"/>
</dbReference>
<dbReference type="Gene3D" id="3.40.50.2020">
    <property type="match status" value="1"/>
</dbReference>
<dbReference type="HAMAP" id="MF_01208">
    <property type="entry name" value="PyrE"/>
    <property type="match status" value="1"/>
</dbReference>
<dbReference type="InterPro" id="IPR023031">
    <property type="entry name" value="OPRT"/>
</dbReference>
<dbReference type="InterPro" id="IPR004467">
    <property type="entry name" value="Or_phspho_trans_dom"/>
</dbReference>
<dbReference type="InterPro" id="IPR000836">
    <property type="entry name" value="PRibTrfase_dom"/>
</dbReference>
<dbReference type="InterPro" id="IPR029057">
    <property type="entry name" value="PRTase-like"/>
</dbReference>
<dbReference type="NCBIfam" id="TIGR00336">
    <property type="entry name" value="pyrE"/>
    <property type="match status" value="1"/>
</dbReference>
<dbReference type="PANTHER" id="PTHR46683">
    <property type="entry name" value="OROTATE PHOSPHORIBOSYLTRANSFERASE 1-RELATED"/>
    <property type="match status" value="1"/>
</dbReference>
<dbReference type="PANTHER" id="PTHR46683:SF1">
    <property type="entry name" value="OROTATE PHOSPHORIBOSYLTRANSFERASE 1-RELATED"/>
    <property type="match status" value="1"/>
</dbReference>
<dbReference type="Pfam" id="PF00156">
    <property type="entry name" value="Pribosyltran"/>
    <property type="match status" value="1"/>
</dbReference>
<dbReference type="SUPFAM" id="SSF53271">
    <property type="entry name" value="PRTase-like"/>
    <property type="match status" value="1"/>
</dbReference>
<dbReference type="PROSITE" id="PS00103">
    <property type="entry name" value="PUR_PYR_PR_TRANSFER"/>
    <property type="match status" value="1"/>
</dbReference>
<proteinExistence type="inferred from homology"/>
<evidence type="ECO:0000255" key="1">
    <source>
        <dbReference type="HAMAP-Rule" id="MF_01208"/>
    </source>
</evidence>
<feature type="chain" id="PRO_1000066272" description="Orotate phosphoribosyltransferase">
    <location>
        <begin position="1"/>
        <end position="213"/>
    </location>
</feature>
<feature type="binding site" description="in other chain" evidence="1">
    <location>
        <position position="26"/>
    </location>
    <ligand>
        <name>5-phospho-alpha-D-ribose 1-diphosphate</name>
        <dbReference type="ChEBI" id="CHEBI:58017"/>
        <note>ligand shared between dimeric partners</note>
    </ligand>
</feature>
<feature type="binding site" evidence="1">
    <location>
        <begin position="34"/>
        <end position="35"/>
    </location>
    <ligand>
        <name>orotate</name>
        <dbReference type="ChEBI" id="CHEBI:30839"/>
    </ligand>
</feature>
<feature type="binding site" description="in other chain" evidence="1">
    <location>
        <begin position="72"/>
        <end position="73"/>
    </location>
    <ligand>
        <name>5-phospho-alpha-D-ribose 1-diphosphate</name>
        <dbReference type="ChEBI" id="CHEBI:58017"/>
        <note>ligand shared between dimeric partners</note>
    </ligand>
</feature>
<feature type="binding site" evidence="1">
    <location>
        <position position="99"/>
    </location>
    <ligand>
        <name>5-phospho-alpha-D-ribose 1-diphosphate</name>
        <dbReference type="ChEBI" id="CHEBI:58017"/>
        <note>ligand shared between dimeric partners</note>
    </ligand>
</feature>
<feature type="binding site" description="in other chain" evidence="1">
    <location>
        <position position="100"/>
    </location>
    <ligand>
        <name>5-phospho-alpha-D-ribose 1-diphosphate</name>
        <dbReference type="ChEBI" id="CHEBI:58017"/>
        <note>ligand shared between dimeric partners</note>
    </ligand>
</feature>
<feature type="binding site" evidence="1">
    <location>
        <position position="103"/>
    </location>
    <ligand>
        <name>5-phospho-alpha-D-ribose 1-diphosphate</name>
        <dbReference type="ChEBI" id="CHEBI:58017"/>
        <note>ligand shared between dimeric partners</note>
    </ligand>
</feature>
<feature type="binding site" evidence="1">
    <location>
        <position position="105"/>
    </location>
    <ligand>
        <name>5-phospho-alpha-D-ribose 1-diphosphate</name>
        <dbReference type="ChEBI" id="CHEBI:58017"/>
        <note>ligand shared between dimeric partners</note>
    </ligand>
</feature>
<feature type="binding site" description="in other chain" evidence="1">
    <location>
        <begin position="124"/>
        <end position="132"/>
    </location>
    <ligand>
        <name>5-phospho-alpha-D-ribose 1-diphosphate</name>
        <dbReference type="ChEBI" id="CHEBI:58017"/>
        <note>ligand shared between dimeric partners</note>
    </ligand>
</feature>
<feature type="binding site" evidence="1">
    <location>
        <position position="128"/>
    </location>
    <ligand>
        <name>orotate</name>
        <dbReference type="ChEBI" id="CHEBI:30839"/>
    </ligand>
</feature>
<feature type="binding site" evidence="1">
    <location>
        <position position="156"/>
    </location>
    <ligand>
        <name>orotate</name>
        <dbReference type="ChEBI" id="CHEBI:30839"/>
    </ligand>
</feature>
<name>PYRE_PSEAB</name>
<reference key="1">
    <citation type="journal article" date="2006" name="Genome Biol.">
        <title>Genomic analysis reveals that Pseudomonas aeruginosa virulence is combinatorial.</title>
        <authorList>
            <person name="Lee D.G."/>
            <person name="Urbach J.M."/>
            <person name="Wu G."/>
            <person name="Liberati N.T."/>
            <person name="Feinbaum R.L."/>
            <person name="Miyata S."/>
            <person name="Diggins L.T."/>
            <person name="He J."/>
            <person name="Saucier M."/>
            <person name="Deziel E."/>
            <person name="Friedman L."/>
            <person name="Li L."/>
            <person name="Grills G."/>
            <person name="Montgomery K."/>
            <person name="Kucherlapati R."/>
            <person name="Rahme L.G."/>
            <person name="Ausubel F.M."/>
        </authorList>
    </citation>
    <scope>NUCLEOTIDE SEQUENCE [LARGE SCALE GENOMIC DNA]</scope>
    <source>
        <strain>UCBPP-PA14</strain>
    </source>
</reference>
<accession>Q02E31</accession>
<comment type="function">
    <text evidence="1">Catalyzes the transfer of a ribosyl phosphate group from 5-phosphoribose 1-diphosphate to orotate, leading to the formation of orotidine monophosphate (OMP).</text>
</comment>
<comment type="catalytic activity">
    <reaction evidence="1">
        <text>orotidine 5'-phosphate + diphosphate = orotate + 5-phospho-alpha-D-ribose 1-diphosphate</text>
        <dbReference type="Rhea" id="RHEA:10380"/>
        <dbReference type="ChEBI" id="CHEBI:30839"/>
        <dbReference type="ChEBI" id="CHEBI:33019"/>
        <dbReference type="ChEBI" id="CHEBI:57538"/>
        <dbReference type="ChEBI" id="CHEBI:58017"/>
        <dbReference type="EC" id="2.4.2.10"/>
    </reaction>
</comment>
<comment type="cofactor">
    <cofactor evidence="1">
        <name>Mg(2+)</name>
        <dbReference type="ChEBI" id="CHEBI:18420"/>
    </cofactor>
</comment>
<comment type="pathway">
    <text evidence="1">Pyrimidine metabolism; UMP biosynthesis via de novo pathway; UMP from orotate: step 1/2.</text>
</comment>
<comment type="subunit">
    <text evidence="1">Homodimer.</text>
</comment>
<comment type="similarity">
    <text evidence="1">Belongs to the purine/pyrimidine phosphoribosyltransferase family. PyrE subfamily.</text>
</comment>